<proteinExistence type="evidence at protein level"/>
<comment type="function">
    <text evidence="1 4">Required for vesicle-mediated transport. Catalyzes the fusion of transport vesicles within the Golgi cisternae. Is also required for transport from the endoplasmic reticulum to the Golgi stack. Seems to function as a fusion protein required for the delivery of cargo proteins to all compartments of the Golgi stack independent of vesicle origin (By similarity). Required for maintaining the normal morphology of the Golgi apparatus (PubMed:29398689).</text>
</comment>
<comment type="catalytic activity">
    <reaction>
        <text>ATP + H2O = ADP + phosphate + H(+)</text>
        <dbReference type="Rhea" id="RHEA:13065"/>
        <dbReference type="ChEBI" id="CHEBI:15377"/>
        <dbReference type="ChEBI" id="CHEBI:15378"/>
        <dbReference type="ChEBI" id="CHEBI:30616"/>
        <dbReference type="ChEBI" id="CHEBI:43474"/>
        <dbReference type="ChEBI" id="CHEBI:456216"/>
        <dbReference type="EC" id="3.6.4.6"/>
    </reaction>
</comment>
<comment type="cofactor">
    <cofactor evidence="1">
        <name>Mg(2+)</name>
        <dbReference type="ChEBI" id="CHEBI:18420"/>
    </cofactor>
    <text evidence="1">Binds 1 Mg(2+) ion per subunit.</text>
</comment>
<comment type="subunit">
    <text evidence="2 6">Homohexamer (By similarity). Binds to SNARE-SNAP complexes to form 20S particles (Probable).</text>
</comment>
<comment type="subcellular location">
    <subcellularLocation>
        <location evidence="3">Cytoplasm</location>
    </subcellularLocation>
</comment>
<comment type="similarity">
    <text evidence="6">Belongs to the AAA ATPase family.</text>
</comment>
<comment type="sequence caution" evidence="6">
    <conflict type="erroneous gene model prediction">
        <sequence resource="EMBL-CDS" id="AAD17345"/>
    </conflict>
</comment>
<comment type="sequence caution" evidence="6">
    <conflict type="erroneous gene model prediction">
        <sequence resource="EMBL-CDS" id="CAB81033"/>
    </conflict>
</comment>
<dbReference type="EC" id="3.6.4.6" evidence="6"/>
<dbReference type="EMBL" id="AF128393">
    <property type="protein sequence ID" value="AAD17345.1"/>
    <property type="status" value="ALT_SEQ"/>
    <property type="molecule type" value="Genomic_DNA"/>
</dbReference>
<dbReference type="EMBL" id="AL161502">
    <property type="protein sequence ID" value="CAB81033.1"/>
    <property type="status" value="ALT_SEQ"/>
    <property type="molecule type" value="Genomic_DNA"/>
</dbReference>
<dbReference type="EMBL" id="CP002687">
    <property type="protein sequence ID" value="AEE82440.1"/>
    <property type="molecule type" value="Genomic_DNA"/>
</dbReference>
<dbReference type="EMBL" id="AY102111">
    <property type="protein sequence ID" value="AAM26681.1"/>
    <property type="molecule type" value="mRNA"/>
</dbReference>
<dbReference type="PIR" id="G85061">
    <property type="entry name" value="G85061"/>
</dbReference>
<dbReference type="RefSeq" id="NP_192400.2">
    <property type="nucleotide sequence ID" value="NM_116729.4"/>
</dbReference>
<dbReference type="SMR" id="Q9M0Y8"/>
<dbReference type="BioGRID" id="11141">
    <property type="interactions" value="10"/>
</dbReference>
<dbReference type="FunCoup" id="Q9M0Y8">
    <property type="interactions" value="3894"/>
</dbReference>
<dbReference type="IntAct" id="Q9M0Y8">
    <property type="interactions" value="5"/>
</dbReference>
<dbReference type="STRING" id="3702.Q9M0Y8"/>
<dbReference type="iPTMnet" id="Q9M0Y8"/>
<dbReference type="PaxDb" id="3702-AT4G04910.1"/>
<dbReference type="ProteomicsDB" id="249130"/>
<dbReference type="EnsemblPlants" id="AT4G04910.1">
    <property type="protein sequence ID" value="AT4G04910.1"/>
    <property type="gene ID" value="AT4G04910"/>
</dbReference>
<dbReference type="GeneID" id="825830"/>
<dbReference type="Gramene" id="AT4G04910.1">
    <property type="protein sequence ID" value="AT4G04910.1"/>
    <property type="gene ID" value="AT4G04910"/>
</dbReference>
<dbReference type="KEGG" id="ath:AT4G04910"/>
<dbReference type="Araport" id="AT4G04910"/>
<dbReference type="TAIR" id="AT4G04910">
    <property type="gene designation" value="NSF"/>
</dbReference>
<dbReference type="eggNOG" id="KOG0741">
    <property type="taxonomic scope" value="Eukaryota"/>
</dbReference>
<dbReference type="HOGENOM" id="CLU_008037_2_0_1"/>
<dbReference type="InParanoid" id="Q9M0Y8"/>
<dbReference type="OMA" id="CFDNEIA"/>
<dbReference type="PhylomeDB" id="Q9M0Y8"/>
<dbReference type="BioCyc" id="ARA:AT4G04910-MONOMER"/>
<dbReference type="PRO" id="PR:Q9M0Y8"/>
<dbReference type="Proteomes" id="UP000006548">
    <property type="component" value="Chromosome 4"/>
</dbReference>
<dbReference type="ExpressionAtlas" id="Q9M0Y8">
    <property type="expression patterns" value="baseline and differential"/>
</dbReference>
<dbReference type="GO" id="GO:0005829">
    <property type="term" value="C:cytosol"/>
    <property type="evidence" value="ECO:0007005"/>
    <property type="project" value="TAIR"/>
</dbReference>
<dbReference type="GO" id="GO:0005794">
    <property type="term" value="C:Golgi apparatus"/>
    <property type="evidence" value="ECO:0007005"/>
    <property type="project" value="TAIR"/>
</dbReference>
<dbReference type="GO" id="GO:0000325">
    <property type="term" value="C:plant-type vacuole"/>
    <property type="evidence" value="ECO:0007005"/>
    <property type="project" value="TAIR"/>
</dbReference>
<dbReference type="GO" id="GO:0005886">
    <property type="term" value="C:plasma membrane"/>
    <property type="evidence" value="ECO:0000314"/>
    <property type="project" value="TAIR"/>
</dbReference>
<dbReference type="GO" id="GO:0009506">
    <property type="term" value="C:plasmodesma"/>
    <property type="evidence" value="ECO:0007005"/>
    <property type="project" value="TAIR"/>
</dbReference>
<dbReference type="GO" id="GO:0005524">
    <property type="term" value="F:ATP binding"/>
    <property type="evidence" value="ECO:0007669"/>
    <property type="project" value="UniProtKB-KW"/>
</dbReference>
<dbReference type="GO" id="GO:0016887">
    <property type="term" value="F:ATP hydrolysis activity"/>
    <property type="evidence" value="ECO:0000316"/>
    <property type="project" value="TAIR"/>
</dbReference>
<dbReference type="GO" id="GO:0046872">
    <property type="term" value="F:metal ion binding"/>
    <property type="evidence" value="ECO:0007669"/>
    <property type="project" value="UniProtKB-KW"/>
</dbReference>
<dbReference type="GO" id="GO:0007030">
    <property type="term" value="P:Golgi organization"/>
    <property type="evidence" value="ECO:0000315"/>
    <property type="project" value="UniProtKB"/>
</dbReference>
<dbReference type="GO" id="GO:0015031">
    <property type="term" value="P:protein transport"/>
    <property type="evidence" value="ECO:0007669"/>
    <property type="project" value="UniProtKB-KW"/>
</dbReference>
<dbReference type="GO" id="GO:0035494">
    <property type="term" value="P:SNARE complex disassembly"/>
    <property type="evidence" value="ECO:0007669"/>
    <property type="project" value="InterPro"/>
</dbReference>
<dbReference type="GO" id="GO:0016192">
    <property type="term" value="P:vesicle-mediated transport"/>
    <property type="evidence" value="ECO:0000315"/>
    <property type="project" value="TAIR"/>
</dbReference>
<dbReference type="CDD" id="cd19504">
    <property type="entry name" value="RecA-like_NSF-SEC18_r1-like"/>
    <property type="match status" value="1"/>
</dbReference>
<dbReference type="FunFam" id="1.10.8.60:FF:000049">
    <property type="entry name" value="Vesicle-fusing ATPase"/>
    <property type="match status" value="1"/>
</dbReference>
<dbReference type="FunFam" id="3.10.330.10:FF:000007">
    <property type="entry name" value="Vesicle-fusing ATPase"/>
    <property type="match status" value="1"/>
</dbReference>
<dbReference type="FunFam" id="3.40.50.300:FF:000166">
    <property type="entry name" value="vesicle-fusing ATPase isoform X1"/>
    <property type="match status" value="1"/>
</dbReference>
<dbReference type="FunFam" id="2.40.40.20:FF:000012">
    <property type="entry name" value="Vesicle-fusing ATPase protein"/>
    <property type="match status" value="1"/>
</dbReference>
<dbReference type="FunFam" id="3.40.50.300:FF:000187">
    <property type="entry name" value="Vesicular-fusion ATPase SEC18"/>
    <property type="match status" value="1"/>
</dbReference>
<dbReference type="Gene3D" id="1.10.8.60">
    <property type="match status" value="1"/>
</dbReference>
<dbReference type="Gene3D" id="2.40.40.20">
    <property type="match status" value="1"/>
</dbReference>
<dbReference type="Gene3D" id="3.10.330.10">
    <property type="match status" value="1"/>
</dbReference>
<dbReference type="Gene3D" id="3.40.50.300">
    <property type="entry name" value="P-loop containing nucleotide triphosphate hydrolases"/>
    <property type="match status" value="2"/>
</dbReference>
<dbReference type="InterPro" id="IPR003593">
    <property type="entry name" value="AAA+_ATPase"/>
</dbReference>
<dbReference type="InterPro" id="IPR041569">
    <property type="entry name" value="AAA_lid_3"/>
</dbReference>
<dbReference type="InterPro" id="IPR009010">
    <property type="entry name" value="Asp_de-COase-like_dom_sf"/>
</dbReference>
<dbReference type="InterPro" id="IPR003959">
    <property type="entry name" value="ATPase_AAA_core"/>
</dbReference>
<dbReference type="InterPro" id="IPR003960">
    <property type="entry name" value="ATPase_AAA_CS"/>
</dbReference>
<dbReference type="InterPro" id="IPR004201">
    <property type="entry name" value="Cdc48_dom2"/>
</dbReference>
<dbReference type="InterPro" id="IPR029067">
    <property type="entry name" value="CDC48_domain_2-like_sf"/>
</dbReference>
<dbReference type="InterPro" id="IPR003338">
    <property type="entry name" value="CDC4_N-term_subdom"/>
</dbReference>
<dbReference type="InterPro" id="IPR027417">
    <property type="entry name" value="P-loop_NTPase"/>
</dbReference>
<dbReference type="InterPro" id="IPR039812">
    <property type="entry name" value="Vesicle-fus_ATPase"/>
</dbReference>
<dbReference type="PANTHER" id="PTHR23078:SF3">
    <property type="entry name" value="VESICLE-FUSING ATPASE"/>
    <property type="match status" value="1"/>
</dbReference>
<dbReference type="PANTHER" id="PTHR23078">
    <property type="entry name" value="VESICULAR-FUSION PROTEIN NSF"/>
    <property type="match status" value="1"/>
</dbReference>
<dbReference type="Pfam" id="PF00004">
    <property type="entry name" value="AAA"/>
    <property type="match status" value="2"/>
</dbReference>
<dbReference type="Pfam" id="PF17862">
    <property type="entry name" value="AAA_lid_3"/>
    <property type="match status" value="1"/>
</dbReference>
<dbReference type="Pfam" id="PF02933">
    <property type="entry name" value="CDC48_2"/>
    <property type="match status" value="1"/>
</dbReference>
<dbReference type="SMART" id="SM00382">
    <property type="entry name" value="AAA"/>
    <property type="match status" value="2"/>
</dbReference>
<dbReference type="SMART" id="SM01073">
    <property type="entry name" value="CDC48_N"/>
    <property type="match status" value="1"/>
</dbReference>
<dbReference type="SUPFAM" id="SSF50692">
    <property type="entry name" value="ADC-like"/>
    <property type="match status" value="1"/>
</dbReference>
<dbReference type="SUPFAM" id="SSF54585">
    <property type="entry name" value="Cdc48 domain 2-like"/>
    <property type="match status" value="1"/>
</dbReference>
<dbReference type="SUPFAM" id="SSF52540">
    <property type="entry name" value="P-loop containing nucleoside triphosphate hydrolases"/>
    <property type="match status" value="2"/>
</dbReference>
<dbReference type="PROSITE" id="PS00674">
    <property type="entry name" value="AAA"/>
    <property type="match status" value="1"/>
</dbReference>
<reference key="1">
    <citation type="journal article" date="1999" name="Nature">
        <title>Sequence and analysis of chromosome 4 of the plant Arabidopsis thaliana.</title>
        <authorList>
            <person name="Mayer K.F.X."/>
            <person name="Schueller C."/>
            <person name="Wambutt R."/>
            <person name="Murphy G."/>
            <person name="Volckaert G."/>
            <person name="Pohl T."/>
            <person name="Duesterhoeft A."/>
            <person name="Stiekema W."/>
            <person name="Entian K.-D."/>
            <person name="Terryn N."/>
            <person name="Harris B."/>
            <person name="Ansorge W."/>
            <person name="Brandt P."/>
            <person name="Grivell L.A."/>
            <person name="Rieger M."/>
            <person name="Weichselgartner M."/>
            <person name="de Simone V."/>
            <person name="Obermaier B."/>
            <person name="Mache R."/>
            <person name="Mueller M."/>
            <person name="Kreis M."/>
            <person name="Delseny M."/>
            <person name="Puigdomenech P."/>
            <person name="Watson M."/>
            <person name="Schmidtheini T."/>
            <person name="Reichert B."/>
            <person name="Portetelle D."/>
            <person name="Perez-Alonso M."/>
            <person name="Boutry M."/>
            <person name="Bancroft I."/>
            <person name="Vos P."/>
            <person name="Hoheisel J."/>
            <person name="Zimmermann W."/>
            <person name="Wedler H."/>
            <person name="Ridley P."/>
            <person name="Langham S.-A."/>
            <person name="McCullagh B."/>
            <person name="Bilham L."/>
            <person name="Robben J."/>
            <person name="van der Schueren J."/>
            <person name="Grymonprez B."/>
            <person name="Chuang Y.-J."/>
            <person name="Vandenbussche F."/>
            <person name="Braeken M."/>
            <person name="Weltjens I."/>
            <person name="Voet M."/>
            <person name="Bastiaens I."/>
            <person name="Aert R."/>
            <person name="Defoor E."/>
            <person name="Weitzenegger T."/>
            <person name="Bothe G."/>
            <person name="Ramsperger U."/>
            <person name="Hilbert H."/>
            <person name="Braun M."/>
            <person name="Holzer E."/>
            <person name="Brandt A."/>
            <person name="Peters S."/>
            <person name="van Staveren M."/>
            <person name="Dirkse W."/>
            <person name="Mooijman P."/>
            <person name="Klein Lankhorst R."/>
            <person name="Rose M."/>
            <person name="Hauf J."/>
            <person name="Koetter P."/>
            <person name="Berneiser S."/>
            <person name="Hempel S."/>
            <person name="Feldpausch M."/>
            <person name="Lamberth S."/>
            <person name="Van den Daele H."/>
            <person name="De Keyser A."/>
            <person name="Buysshaert C."/>
            <person name="Gielen J."/>
            <person name="Villarroel R."/>
            <person name="De Clercq R."/>
            <person name="van Montagu M."/>
            <person name="Rogers J."/>
            <person name="Cronin A."/>
            <person name="Quail M.A."/>
            <person name="Bray-Allen S."/>
            <person name="Clark L."/>
            <person name="Doggett J."/>
            <person name="Hall S."/>
            <person name="Kay M."/>
            <person name="Lennard N."/>
            <person name="McLay K."/>
            <person name="Mayes R."/>
            <person name="Pettett A."/>
            <person name="Rajandream M.A."/>
            <person name="Lyne M."/>
            <person name="Benes V."/>
            <person name="Rechmann S."/>
            <person name="Borkova D."/>
            <person name="Bloecker H."/>
            <person name="Scharfe M."/>
            <person name="Grimm M."/>
            <person name="Loehnert T.-H."/>
            <person name="Dose S."/>
            <person name="de Haan M."/>
            <person name="Maarse A.C."/>
            <person name="Schaefer M."/>
            <person name="Mueller-Auer S."/>
            <person name="Gabel C."/>
            <person name="Fuchs M."/>
            <person name="Fartmann B."/>
            <person name="Granderath K."/>
            <person name="Dauner D."/>
            <person name="Herzl A."/>
            <person name="Neumann S."/>
            <person name="Argiriou A."/>
            <person name="Vitale D."/>
            <person name="Liguori R."/>
            <person name="Piravandi E."/>
            <person name="Massenet O."/>
            <person name="Quigley F."/>
            <person name="Clabauld G."/>
            <person name="Muendlein A."/>
            <person name="Felber R."/>
            <person name="Schnabl S."/>
            <person name="Hiller R."/>
            <person name="Schmidt W."/>
            <person name="Lecharny A."/>
            <person name="Aubourg S."/>
            <person name="Chefdor F."/>
            <person name="Cooke R."/>
            <person name="Berger C."/>
            <person name="Monfort A."/>
            <person name="Casacuberta E."/>
            <person name="Gibbons T."/>
            <person name="Weber N."/>
            <person name="Vandenbol M."/>
            <person name="Bargues M."/>
            <person name="Terol J."/>
            <person name="Torres A."/>
            <person name="Perez-Perez A."/>
            <person name="Purnelle B."/>
            <person name="Bent E."/>
            <person name="Johnson S."/>
            <person name="Tacon D."/>
            <person name="Jesse T."/>
            <person name="Heijnen L."/>
            <person name="Schwarz S."/>
            <person name="Scholler P."/>
            <person name="Heber S."/>
            <person name="Francs P."/>
            <person name="Bielke C."/>
            <person name="Frishman D."/>
            <person name="Haase D."/>
            <person name="Lemcke K."/>
            <person name="Mewes H.-W."/>
            <person name="Stocker S."/>
            <person name="Zaccaria P."/>
            <person name="Bevan M."/>
            <person name="Wilson R.K."/>
            <person name="de la Bastide M."/>
            <person name="Habermann K."/>
            <person name="Parnell L."/>
            <person name="Dedhia N."/>
            <person name="Gnoj L."/>
            <person name="Schutz K."/>
            <person name="Huang E."/>
            <person name="Spiegel L."/>
            <person name="Sekhon M."/>
            <person name="Murray J."/>
            <person name="Sheet P."/>
            <person name="Cordes M."/>
            <person name="Abu-Threideh J."/>
            <person name="Stoneking T."/>
            <person name="Kalicki J."/>
            <person name="Graves T."/>
            <person name="Harmon G."/>
            <person name="Edwards J."/>
            <person name="Latreille P."/>
            <person name="Courtney L."/>
            <person name="Cloud J."/>
            <person name="Abbott A."/>
            <person name="Scott K."/>
            <person name="Johnson D."/>
            <person name="Minx P."/>
            <person name="Bentley D."/>
            <person name="Fulton B."/>
            <person name="Miller N."/>
            <person name="Greco T."/>
            <person name="Kemp K."/>
            <person name="Kramer J."/>
            <person name="Fulton L."/>
            <person name="Mardis E."/>
            <person name="Dante M."/>
            <person name="Pepin K."/>
            <person name="Hillier L.W."/>
            <person name="Nelson J."/>
            <person name="Spieth J."/>
            <person name="Ryan E."/>
            <person name="Andrews S."/>
            <person name="Geisel C."/>
            <person name="Layman D."/>
            <person name="Du H."/>
            <person name="Ali J."/>
            <person name="Berghoff A."/>
            <person name="Jones K."/>
            <person name="Drone K."/>
            <person name="Cotton M."/>
            <person name="Joshu C."/>
            <person name="Antonoiu B."/>
            <person name="Zidanic M."/>
            <person name="Strong C."/>
            <person name="Sun H."/>
            <person name="Lamar B."/>
            <person name="Yordan C."/>
            <person name="Ma P."/>
            <person name="Zhong J."/>
            <person name="Preston R."/>
            <person name="Vil D."/>
            <person name="Shekher M."/>
            <person name="Matero A."/>
            <person name="Shah R."/>
            <person name="Swaby I.K."/>
            <person name="O'Shaughnessy A."/>
            <person name="Rodriguez M."/>
            <person name="Hoffman J."/>
            <person name="Till S."/>
            <person name="Granat S."/>
            <person name="Shohdy N."/>
            <person name="Hasegawa A."/>
            <person name="Hameed A."/>
            <person name="Lodhi M."/>
            <person name="Johnson A."/>
            <person name="Chen E."/>
            <person name="Marra M.A."/>
            <person name="Martienssen R."/>
            <person name="McCombie W.R."/>
        </authorList>
    </citation>
    <scope>NUCLEOTIDE SEQUENCE [LARGE SCALE GENOMIC DNA]</scope>
    <source>
        <strain>cv. Columbia</strain>
    </source>
</reference>
<reference key="2">
    <citation type="journal article" date="2017" name="Plant J.">
        <title>Araport11: a complete reannotation of the Arabidopsis thaliana reference genome.</title>
        <authorList>
            <person name="Cheng C.Y."/>
            <person name="Krishnakumar V."/>
            <person name="Chan A.P."/>
            <person name="Thibaud-Nissen F."/>
            <person name="Schobel S."/>
            <person name="Town C.D."/>
        </authorList>
    </citation>
    <scope>GENOME REANNOTATION</scope>
    <source>
        <strain>cv. Columbia</strain>
    </source>
</reference>
<reference key="3">
    <citation type="journal article" date="2003" name="Science">
        <title>Empirical analysis of transcriptional activity in the Arabidopsis genome.</title>
        <authorList>
            <person name="Yamada K."/>
            <person name="Lim J."/>
            <person name="Dale J.M."/>
            <person name="Chen H."/>
            <person name="Shinn P."/>
            <person name="Palm C.J."/>
            <person name="Southwick A.M."/>
            <person name="Wu H.C."/>
            <person name="Kim C.J."/>
            <person name="Nguyen M."/>
            <person name="Pham P.K."/>
            <person name="Cheuk R.F."/>
            <person name="Karlin-Newmann G."/>
            <person name="Liu S.X."/>
            <person name="Lam B."/>
            <person name="Sakano H."/>
            <person name="Wu T."/>
            <person name="Yu G."/>
            <person name="Miranda M."/>
            <person name="Quach H.L."/>
            <person name="Tripp M."/>
            <person name="Chang C.H."/>
            <person name="Lee J.M."/>
            <person name="Toriumi M.J."/>
            <person name="Chan M.M."/>
            <person name="Tang C.C."/>
            <person name="Onodera C.S."/>
            <person name="Deng J.M."/>
            <person name="Akiyama K."/>
            <person name="Ansari Y."/>
            <person name="Arakawa T."/>
            <person name="Banh J."/>
            <person name="Banno F."/>
            <person name="Bowser L."/>
            <person name="Brooks S.Y."/>
            <person name="Carninci P."/>
            <person name="Chao Q."/>
            <person name="Choy N."/>
            <person name="Enju A."/>
            <person name="Goldsmith A.D."/>
            <person name="Gurjal M."/>
            <person name="Hansen N.F."/>
            <person name="Hayashizaki Y."/>
            <person name="Johnson-Hopson C."/>
            <person name="Hsuan V.W."/>
            <person name="Iida K."/>
            <person name="Karnes M."/>
            <person name="Khan S."/>
            <person name="Koesema E."/>
            <person name="Ishida J."/>
            <person name="Jiang P.X."/>
            <person name="Jones T."/>
            <person name="Kawai J."/>
            <person name="Kamiya A."/>
            <person name="Meyers C."/>
            <person name="Nakajima M."/>
            <person name="Narusaka M."/>
            <person name="Seki M."/>
            <person name="Sakurai T."/>
            <person name="Satou M."/>
            <person name="Tamse R."/>
            <person name="Vaysberg M."/>
            <person name="Wallender E.K."/>
            <person name="Wong C."/>
            <person name="Yamamura Y."/>
            <person name="Yuan S."/>
            <person name="Shinozaki K."/>
            <person name="Davis R.W."/>
            <person name="Theologis A."/>
            <person name="Ecker J.R."/>
        </authorList>
    </citation>
    <scope>NUCLEOTIDE SEQUENCE [LARGE SCALE MRNA]</scope>
    <source>
        <strain>cv. Columbia</strain>
    </source>
</reference>
<reference key="4">
    <citation type="journal article" date="2018" name="Cell Struct. Funct.">
        <title>A missense mutation in the NSF gene causes abnormal Golgi morphology in Arabidopsis thaliana.</title>
        <authorList>
            <person name="Tanabashi S."/>
            <person name="Shoda K."/>
            <person name="Saito C."/>
            <person name="Sakamoto T."/>
            <person name="Kurata T."/>
            <person name="Uemura T."/>
            <person name="Nakano A."/>
        </authorList>
    </citation>
    <scope>FUNCTION</scope>
    <scope>MUTAGENESIS OF ASP-374</scope>
</reference>
<keyword id="KW-0067">ATP-binding</keyword>
<keyword id="KW-0963">Cytoplasm</keyword>
<keyword id="KW-0931">ER-Golgi transport</keyword>
<keyword id="KW-0378">Hydrolase</keyword>
<keyword id="KW-0460">Magnesium</keyword>
<keyword id="KW-0479">Metal-binding</keyword>
<keyword id="KW-0547">Nucleotide-binding</keyword>
<keyword id="KW-0653">Protein transport</keyword>
<keyword id="KW-1185">Reference proteome</keyword>
<keyword id="KW-0677">Repeat</keyword>
<keyword id="KW-0813">Transport</keyword>
<feature type="chain" id="PRO_0000084568" description="Vesicle-fusing ATPase">
    <location>
        <begin position="1"/>
        <end position="742"/>
    </location>
</feature>
<feature type="binding site" evidence="1">
    <location>
        <begin position="499"/>
        <end position="504"/>
    </location>
    <ligand>
        <name>ATP</name>
        <dbReference type="ChEBI" id="CHEBI:30616"/>
    </ligand>
</feature>
<feature type="binding site" evidence="1">
    <location>
        <begin position="539"/>
        <end position="546"/>
    </location>
    <ligand>
        <name>ATP</name>
        <dbReference type="ChEBI" id="CHEBI:30616"/>
    </ligand>
</feature>
<feature type="binding site" evidence="1">
    <location>
        <position position="544"/>
    </location>
    <ligand>
        <name>Mg(2+)</name>
        <dbReference type="ChEBI" id="CHEBI:18420"/>
    </ligand>
</feature>
<feature type="mutagenesis site" description="Abnormalities in the size and shape of the Golgi apparatus, but normal growth and fertility." evidence="4">
    <original>D</original>
    <variation>N</variation>
    <location>
        <position position="374"/>
    </location>
</feature>
<organism>
    <name type="scientific">Arabidopsis thaliana</name>
    <name type="common">Mouse-ear cress</name>
    <dbReference type="NCBI Taxonomy" id="3702"/>
    <lineage>
        <taxon>Eukaryota</taxon>
        <taxon>Viridiplantae</taxon>
        <taxon>Streptophyta</taxon>
        <taxon>Embryophyta</taxon>
        <taxon>Tracheophyta</taxon>
        <taxon>Spermatophyta</taxon>
        <taxon>Magnoliopsida</taxon>
        <taxon>eudicotyledons</taxon>
        <taxon>Gunneridae</taxon>
        <taxon>Pentapetalae</taxon>
        <taxon>rosids</taxon>
        <taxon>malvids</taxon>
        <taxon>Brassicales</taxon>
        <taxon>Brassicaceae</taxon>
        <taxon>Camelineae</taxon>
        <taxon>Arabidopsis</taxon>
    </lineage>
</organism>
<gene>
    <name evidence="5" type="primary">NSF</name>
    <name evidence="7" type="ordered locus">At4g04910</name>
    <name evidence="8" type="ORF">T1J1.4</name>
</gene>
<sequence length="742" mass="81487">MAGRYGSQVMTMTVTNTPSADLAFTNLAYCSSSDLRQFSVPGSDLFLANVADSFILSLCGHGSIRDGNIALNAIQRRHARVSTGDMVSVSRFVPPENFDLAMLTLELEFVKKGTKSEQVDAALLSTQLKRKYTNQVLTVGQKATFEYHGTNYILTVNRADVEGQDHTNGIERGLLSKDTYIVFEASNASGIKIVNQREAASSNIFKHKEFNLESLGIGGLGAEFADIFRRAFASRVFPPHVTSRLGIKHVKGMLLFGPPGTGKTLMARQIGKMLNGKDPKIVNGPEVLSKFVGETEKNVRDLFADAEQDQRTLGDASELHVIIFDEIDAICKSRGSTRDGTGVHDSIVNQLLTKIDGVEALNNVLLIGMTNRKDLLDEALLRPGRLEVQVEISLPDEAGRLQILQIHTNKMKENSFLGTDINLQELAARTKNYSGAELEGVVKSATSYALNRQLSMDDLTKPVEEENIKITMEDFLHAIYEVQPAFGASTDDLERCRLNGMVDCGHRHNHIYKRAMLLVEQVKVSTRSPLVTCLLEGPSGSGKTALAATIGIDSDFPYVKIVSAETMIGLSESTKCAHIVKVFEDAYKSPMSIIILDDIERLLEFIAIGPRFSNIISQTLMVLLKRLPPKGKKLLVFGTTSEVTFLESVGISDCFSVTHSVPTLQKEDAKKVLNQLNLFSEDDVDSAAEALNDMPIKKIYMLIEMAAQGENGGSAEAIYAGREKININHFYDCLGDFIRFTG</sequence>
<evidence type="ECO:0000250" key="1">
    <source>
        <dbReference type="UniProtKB" id="P18708"/>
    </source>
</evidence>
<evidence type="ECO:0000250" key="2">
    <source>
        <dbReference type="UniProtKB" id="P46460"/>
    </source>
</evidence>
<evidence type="ECO:0000250" key="3">
    <source>
        <dbReference type="UniProtKB" id="P54351"/>
    </source>
</evidence>
<evidence type="ECO:0000269" key="4">
    <source>
    </source>
</evidence>
<evidence type="ECO:0000303" key="5">
    <source>
    </source>
</evidence>
<evidence type="ECO:0000305" key="6"/>
<evidence type="ECO:0000312" key="7">
    <source>
        <dbReference type="Araport" id="AT4G04910"/>
    </source>
</evidence>
<evidence type="ECO:0000312" key="8">
    <source>
        <dbReference type="EMBL" id="AAD17345.1"/>
    </source>
</evidence>
<accession>Q9M0Y8</accession>
<accession>Q9ZPH6</accession>
<name>NSF_ARATH</name>
<protein>
    <recommendedName>
        <fullName evidence="6">Vesicle-fusing ATPase</fullName>
        <ecNumber evidence="6">3.6.4.6</ecNumber>
    </recommendedName>
    <alternativeName>
        <fullName evidence="5">N-ethylmaleimide-sensitive fusion protein</fullName>
    </alternativeName>
    <alternativeName>
        <fullName>Vesicular-fusion protein NSF</fullName>
    </alternativeName>
</protein>